<name>MLTF_ECOSM</name>
<feature type="signal peptide" evidence="1">
    <location>
        <begin position="1"/>
        <end position="21"/>
    </location>
</feature>
<feature type="chain" id="PRO_0000353934" description="Membrane-bound lytic murein transglycosylase F">
    <location>
        <begin position="22"/>
        <end position="518"/>
    </location>
</feature>
<feature type="region of interest" description="Non-LT domain" evidence="1">
    <location>
        <begin position="22"/>
        <end position="269"/>
    </location>
</feature>
<feature type="region of interest" description="LT domain" evidence="1">
    <location>
        <begin position="270"/>
        <end position="518"/>
    </location>
</feature>
<feature type="active site" evidence="1">
    <location>
        <position position="314"/>
    </location>
</feature>
<sequence>MKKLKINYLFIGILALLLAVALWPSIPWFGKADNRIAAIQARGELRVSTINTPLTYNEINGKPFGLDYELAKQFADYLGVKLKVTVRQNISQLFDDLDNGNADLLAAGLVYNSERVKNYQPGPTYYSVSQQLVYKVGQYRPRTLGNLTAEQLTVAPGHVVVNDLQTLKETKFPELSWKVDDKKGSAELMEDVIEGKLDYTIADSVAISLFQRVHPELAVALDITDEQPVTWFSPLDGDNTLSAALLDFFNEMNEDGTLARIEEKYLGHGDDFDYVDTRTFLRAVDAVLPQLKPLFEKYAEEIDWRLLAAIAYQESHWDAQATSPTGVRGMMMLTKNTAQSLGITDRTDAEQSISGGVRYLQDMMSKVPESVPENERIWFALAAYNMGYAHMLDARALTAKTKGNPDSWADVKQRLPLLSQKPYYSKLTYGYARGHEAYAYVENIRKYQISLVGYLQEKEKQATEAAMQLAQDYPAVSPTELGKEKFPFLSFLSQSSSNYLTHSPSLLFSRKGSEEKQN</sequence>
<organism>
    <name type="scientific">Escherichia coli (strain SMS-3-5 / SECEC)</name>
    <dbReference type="NCBI Taxonomy" id="439855"/>
    <lineage>
        <taxon>Bacteria</taxon>
        <taxon>Pseudomonadati</taxon>
        <taxon>Pseudomonadota</taxon>
        <taxon>Gammaproteobacteria</taxon>
        <taxon>Enterobacterales</taxon>
        <taxon>Enterobacteriaceae</taxon>
        <taxon>Escherichia</taxon>
    </lineage>
</organism>
<protein>
    <recommendedName>
        <fullName evidence="1">Membrane-bound lytic murein transglycosylase F</fullName>
        <ecNumber evidence="1">4.2.2.n1</ecNumber>
    </recommendedName>
    <alternativeName>
        <fullName evidence="1">Murein lyase F</fullName>
    </alternativeName>
</protein>
<comment type="function">
    <text evidence="1">Murein-degrading enzyme that degrades murein glycan strands and insoluble, high-molecular weight murein sacculi, with the concomitant formation of a 1,6-anhydromuramoyl product. Lytic transglycosylases (LTs) play an integral role in the metabolism of the peptidoglycan (PG) sacculus. Their lytic action creates space within the PG sacculus to allow for its expansion as well as for the insertion of various structures such as secretion systems and flagella.</text>
</comment>
<comment type="catalytic activity">
    <reaction evidence="1">
        <text>Exolytic cleavage of the (1-&gt;4)-beta-glycosidic linkage between N-acetylmuramic acid (MurNAc) and N-acetylglucosamine (GlcNAc) residues in peptidoglycan, from either the reducing or the non-reducing ends of the peptidoglycan chains, with concomitant formation of a 1,6-anhydrobond in the MurNAc residue.</text>
        <dbReference type="EC" id="4.2.2.n1"/>
    </reaction>
</comment>
<comment type="subcellular location">
    <subcellularLocation>
        <location>Cell outer membrane</location>
        <topology>Peripheral membrane protein</topology>
    </subcellularLocation>
    <text evidence="1">Attached to the inner leaflet of the outer membrane.</text>
</comment>
<comment type="domain">
    <text evidence="1">The N-terminal domain does not have lytic activity and probably modulates enzymatic activity. The C-terminal domain is the catalytic active domain.</text>
</comment>
<comment type="similarity">
    <text evidence="1">In the N-terminal section; belongs to the bacterial solute-binding protein 3 family.</text>
</comment>
<comment type="similarity">
    <text evidence="1">In the C-terminal section; belongs to the transglycosylase Slt family.</text>
</comment>
<evidence type="ECO:0000255" key="1">
    <source>
        <dbReference type="HAMAP-Rule" id="MF_02016"/>
    </source>
</evidence>
<reference key="1">
    <citation type="journal article" date="2008" name="J. Bacteriol.">
        <title>Insights into the environmental resistance gene pool from the genome sequence of the multidrug-resistant environmental isolate Escherichia coli SMS-3-5.</title>
        <authorList>
            <person name="Fricke W.F."/>
            <person name="Wright M.S."/>
            <person name="Lindell A.H."/>
            <person name="Harkins D.M."/>
            <person name="Baker-Austin C."/>
            <person name="Ravel J."/>
            <person name="Stepanauskas R."/>
        </authorList>
    </citation>
    <scope>NUCLEOTIDE SEQUENCE [LARGE SCALE GENOMIC DNA]</scope>
    <source>
        <strain>SMS-3-5 / SECEC</strain>
    </source>
</reference>
<gene>
    <name evidence="1" type="primary">mltF</name>
    <name type="ordered locus">EcSMS35_2712</name>
</gene>
<keyword id="KW-0998">Cell outer membrane</keyword>
<keyword id="KW-0961">Cell wall biogenesis/degradation</keyword>
<keyword id="KW-0456">Lyase</keyword>
<keyword id="KW-0472">Membrane</keyword>
<keyword id="KW-0732">Signal</keyword>
<dbReference type="EC" id="4.2.2.n1" evidence="1"/>
<dbReference type="EMBL" id="CP000970">
    <property type="protein sequence ID" value="ACB17324.1"/>
    <property type="molecule type" value="Genomic_DNA"/>
</dbReference>
<dbReference type="RefSeq" id="WP_000734234.1">
    <property type="nucleotide sequence ID" value="NC_010498.1"/>
</dbReference>
<dbReference type="SMR" id="B1LP71"/>
<dbReference type="CAZy" id="GH23">
    <property type="family name" value="Glycoside Hydrolase Family 23"/>
</dbReference>
<dbReference type="KEGG" id="ecm:EcSMS35_2712"/>
<dbReference type="HOGENOM" id="CLU_027494_0_1_6"/>
<dbReference type="Proteomes" id="UP000007011">
    <property type="component" value="Chromosome"/>
</dbReference>
<dbReference type="GO" id="GO:0009279">
    <property type="term" value="C:cell outer membrane"/>
    <property type="evidence" value="ECO:0007669"/>
    <property type="project" value="UniProtKB-SubCell"/>
</dbReference>
<dbReference type="GO" id="GO:0008933">
    <property type="term" value="F:peptidoglycan lytic transglycosylase activity"/>
    <property type="evidence" value="ECO:0007669"/>
    <property type="project" value="UniProtKB-UniRule"/>
</dbReference>
<dbReference type="GO" id="GO:0016998">
    <property type="term" value="P:cell wall macromolecule catabolic process"/>
    <property type="evidence" value="ECO:0007669"/>
    <property type="project" value="UniProtKB-UniRule"/>
</dbReference>
<dbReference type="GO" id="GO:0071555">
    <property type="term" value="P:cell wall organization"/>
    <property type="evidence" value="ECO:0007669"/>
    <property type="project" value="UniProtKB-KW"/>
</dbReference>
<dbReference type="GO" id="GO:0009253">
    <property type="term" value="P:peptidoglycan catabolic process"/>
    <property type="evidence" value="ECO:0007669"/>
    <property type="project" value="TreeGrafter"/>
</dbReference>
<dbReference type="CDD" id="cd13403">
    <property type="entry name" value="MLTF-like"/>
    <property type="match status" value="1"/>
</dbReference>
<dbReference type="CDD" id="cd01009">
    <property type="entry name" value="PBP2_YfhD_N"/>
    <property type="match status" value="1"/>
</dbReference>
<dbReference type="FunFam" id="1.10.530.10:FF:000003">
    <property type="entry name" value="Membrane-bound lytic murein transglycosylase F"/>
    <property type="match status" value="1"/>
</dbReference>
<dbReference type="FunFam" id="3.40.190.10:FF:000051">
    <property type="entry name" value="Membrane-bound lytic murein transglycosylase F"/>
    <property type="match status" value="1"/>
</dbReference>
<dbReference type="Gene3D" id="1.10.530.10">
    <property type="match status" value="1"/>
</dbReference>
<dbReference type="Gene3D" id="3.40.190.10">
    <property type="entry name" value="Periplasmic binding protein-like II"/>
    <property type="match status" value="2"/>
</dbReference>
<dbReference type="HAMAP" id="MF_02016">
    <property type="entry name" value="MltF"/>
    <property type="match status" value="1"/>
</dbReference>
<dbReference type="InterPro" id="IPR023346">
    <property type="entry name" value="Lysozyme-like_dom_sf"/>
</dbReference>
<dbReference type="InterPro" id="IPR023703">
    <property type="entry name" value="MltF"/>
</dbReference>
<dbReference type="InterPro" id="IPR001638">
    <property type="entry name" value="Solute-binding_3/MltF_N"/>
</dbReference>
<dbReference type="InterPro" id="IPR000189">
    <property type="entry name" value="Transglyc_AS"/>
</dbReference>
<dbReference type="InterPro" id="IPR008258">
    <property type="entry name" value="Transglycosylase_SLT_dom_1"/>
</dbReference>
<dbReference type="NCBIfam" id="NF008112">
    <property type="entry name" value="PRK10859.1"/>
    <property type="match status" value="1"/>
</dbReference>
<dbReference type="PANTHER" id="PTHR35936">
    <property type="entry name" value="MEMBRANE-BOUND LYTIC MUREIN TRANSGLYCOSYLASE F"/>
    <property type="match status" value="1"/>
</dbReference>
<dbReference type="PANTHER" id="PTHR35936:SF32">
    <property type="entry name" value="MEMBRANE-BOUND LYTIC MUREIN TRANSGLYCOSYLASE F"/>
    <property type="match status" value="1"/>
</dbReference>
<dbReference type="Pfam" id="PF00497">
    <property type="entry name" value="SBP_bac_3"/>
    <property type="match status" value="1"/>
</dbReference>
<dbReference type="Pfam" id="PF01464">
    <property type="entry name" value="SLT"/>
    <property type="match status" value="1"/>
</dbReference>
<dbReference type="SMART" id="SM00062">
    <property type="entry name" value="PBPb"/>
    <property type="match status" value="1"/>
</dbReference>
<dbReference type="SUPFAM" id="SSF53955">
    <property type="entry name" value="Lysozyme-like"/>
    <property type="match status" value="1"/>
</dbReference>
<dbReference type="SUPFAM" id="SSF53850">
    <property type="entry name" value="Periplasmic binding protein-like II"/>
    <property type="match status" value="1"/>
</dbReference>
<dbReference type="PROSITE" id="PS00922">
    <property type="entry name" value="TRANSGLYCOSYLASE"/>
    <property type="match status" value="1"/>
</dbReference>
<accession>B1LP71</accession>
<proteinExistence type="inferred from homology"/>